<accession>Q10350</accession>
<protein>
    <recommendedName>
        <fullName>Uncharacterized protein C1F12.08</fullName>
    </recommendedName>
</protein>
<evidence type="ECO:0000305" key="1"/>
<organism>
    <name type="scientific">Schizosaccharomyces pombe (strain 972 / ATCC 24843)</name>
    <name type="common">Fission yeast</name>
    <dbReference type="NCBI Taxonomy" id="284812"/>
    <lineage>
        <taxon>Eukaryota</taxon>
        <taxon>Fungi</taxon>
        <taxon>Dikarya</taxon>
        <taxon>Ascomycota</taxon>
        <taxon>Taphrinomycotina</taxon>
        <taxon>Schizosaccharomycetes</taxon>
        <taxon>Schizosaccharomycetales</taxon>
        <taxon>Schizosaccharomycetaceae</taxon>
        <taxon>Schizosaccharomyces</taxon>
    </lineage>
</organism>
<proteinExistence type="predicted"/>
<sequence length="316" mass="35617">MGKTLIFIKLSSLNECIKYSTIISKIARELSIHKGNELYIWVSCSEMCQKRTKHLFRELQNALCELYLSSATTNDSSLLSVVPTIVLFEYWSNIQLGSITDSWNSVYYSENAKDQILNIPAKSFQSIGPDVLNEIHNIEHLPKKDESEDSGKEINNMVSAVGGTFDHLHVGHKVLLTLTAWFGVKEVIVGVSGDELLKKKVQKEFLENIQKRKEEVSNFLHSIKEDINCRVVTIHDPFGPTITDAEIDSLIVSEETKTGATAVQEERVKRGLPELSIYCIDLLYPAQELNLKDNNSLKVSSTAIREELAKLAYKNK</sequence>
<comment type="similarity">
    <text evidence="1">To yeast YGR277c.</text>
</comment>
<gene>
    <name type="ORF">SPAC1F12.08</name>
</gene>
<keyword id="KW-1185">Reference proteome</keyword>
<feature type="chain" id="PRO_0000116603" description="Uncharacterized protein C1F12.08">
    <location>
        <begin position="1"/>
        <end position="316"/>
    </location>
</feature>
<dbReference type="EMBL" id="CU329670">
    <property type="protein sequence ID" value="CAA93812.2"/>
    <property type="molecule type" value="Genomic_DNA"/>
</dbReference>
<dbReference type="PIR" id="S67451">
    <property type="entry name" value="S67451"/>
</dbReference>
<dbReference type="RefSeq" id="NP_594334.2">
    <property type="nucleotide sequence ID" value="NM_001019755.3"/>
</dbReference>
<dbReference type="SMR" id="Q10350"/>
<dbReference type="FunCoup" id="Q10350">
    <property type="interactions" value="31"/>
</dbReference>
<dbReference type="STRING" id="284812.Q10350"/>
<dbReference type="PaxDb" id="4896-SPAC1F12.08.1"/>
<dbReference type="EnsemblFungi" id="SPAC1F12.08.1">
    <property type="protein sequence ID" value="SPAC1F12.08.1:pep"/>
    <property type="gene ID" value="SPAC1F12.08"/>
</dbReference>
<dbReference type="PomBase" id="SPAC1F12.08"/>
<dbReference type="VEuPathDB" id="FungiDB:SPAC1F12.08"/>
<dbReference type="eggNOG" id="KOG3351">
    <property type="taxonomic scope" value="Eukaryota"/>
</dbReference>
<dbReference type="HOGENOM" id="CLU_035272_0_1_1"/>
<dbReference type="InParanoid" id="Q10350"/>
<dbReference type="OMA" id="WIRQYLA"/>
<dbReference type="PhylomeDB" id="Q10350"/>
<dbReference type="Reactome" id="R-SPO-196783">
    <property type="pathway name" value="Coenzyme A biosynthesis"/>
</dbReference>
<dbReference type="PRO" id="PR:Q10350"/>
<dbReference type="Proteomes" id="UP000002485">
    <property type="component" value="Chromosome I"/>
</dbReference>
<dbReference type="GO" id="GO:0005829">
    <property type="term" value="C:cytosol"/>
    <property type="evidence" value="ECO:0007005"/>
    <property type="project" value="PomBase"/>
</dbReference>
<dbReference type="GO" id="GO:0005634">
    <property type="term" value="C:nucleus"/>
    <property type="evidence" value="ECO:0007005"/>
    <property type="project" value="PomBase"/>
</dbReference>
<dbReference type="GO" id="GO:0004140">
    <property type="term" value="F:dephospho-CoA kinase activity"/>
    <property type="evidence" value="ECO:0000318"/>
    <property type="project" value="GO_Central"/>
</dbReference>
<dbReference type="GO" id="GO:0015937">
    <property type="term" value="P:coenzyme A biosynthetic process"/>
    <property type="evidence" value="ECO:0000318"/>
    <property type="project" value="GO_Central"/>
</dbReference>
<dbReference type="Gene3D" id="3.40.50.620">
    <property type="entry name" value="HUPs"/>
    <property type="match status" value="1"/>
</dbReference>
<dbReference type="InterPro" id="IPR004821">
    <property type="entry name" value="Cyt_trans-like"/>
</dbReference>
<dbReference type="InterPro" id="IPR014729">
    <property type="entry name" value="Rossmann-like_a/b/a_fold"/>
</dbReference>
<dbReference type="NCBIfam" id="NF001985">
    <property type="entry name" value="PRK00777.1"/>
    <property type="match status" value="1"/>
</dbReference>
<dbReference type="PANTHER" id="PTHR10695:SF46">
    <property type="entry name" value="BIFUNCTIONAL COENZYME A SYNTHASE-RELATED"/>
    <property type="match status" value="1"/>
</dbReference>
<dbReference type="PANTHER" id="PTHR10695">
    <property type="entry name" value="DEPHOSPHO-COA KINASE-RELATED"/>
    <property type="match status" value="1"/>
</dbReference>
<dbReference type="Pfam" id="PF01467">
    <property type="entry name" value="CTP_transf_like"/>
    <property type="match status" value="1"/>
</dbReference>
<dbReference type="SUPFAM" id="SSF52374">
    <property type="entry name" value="Nucleotidylyl transferase"/>
    <property type="match status" value="1"/>
</dbReference>
<reference key="1">
    <citation type="journal article" date="2002" name="Nature">
        <title>The genome sequence of Schizosaccharomyces pombe.</title>
        <authorList>
            <person name="Wood V."/>
            <person name="Gwilliam R."/>
            <person name="Rajandream M.A."/>
            <person name="Lyne M.H."/>
            <person name="Lyne R."/>
            <person name="Stewart A."/>
            <person name="Sgouros J.G."/>
            <person name="Peat N."/>
            <person name="Hayles J."/>
            <person name="Baker S.G."/>
            <person name="Basham D."/>
            <person name="Bowman S."/>
            <person name="Brooks K."/>
            <person name="Brown D."/>
            <person name="Brown S."/>
            <person name="Chillingworth T."/>
            <person name="Churcher C.M."/>
            <person name="Collins M."/>
            <person name="Connor R."/>
            <person name="Cronin A."/>
            <person name="Davis P."/>
            <person name="Feltwell T."/>
            <person name="Fraser A."/>
            <person name="Gentles S."/>
            <person name="Goble A."/>
            <person name="Hamlin N."/>
            <person name="Harris D.E."/>
            <person name="Hidalgo J."/>
            <person name="Hodgson G."/>
            <person name="Holroyd S."/>
            <person name="Hornsby T."/>
            <person name="Howarth S."/>
            <person name="Huckle E.J."/>
            <person name="Hunt S."/>
            <person name="Jagels K."/>
            <person name="James K.D."/>
            <person name="Jones L."/>
            <person name="Jones M."/>
            <person name="Leather S."/>
            <person name="McDonald S."/>
            <person name="McLean J."/>
            <person name="Mooney P."/>
            <person name="Moule S."/>
            <person name="Mungall K.L."/>
            <person name="Murphy L.D."/>
            <person name="Niblett D."/>
            <person name="Odell C."/>
            <person name="Oliver K."/>
            <person name="O'Neil S."/>
            <person name="Pearson D."/>
            <person name="Quail M.A."/>
            <person name="Rabbinowitsch E."/>
            <person name="Rutherford K.M."/>
            <person name="Rutter S."/>
            <person name="Saunders D."/>
            <person name="Seeger K."/>
            <person name="Sharp S."/>
            <person name="Skelton J."/>
            <person name="Simmonds M.N."/>
            <person name="Squares R."/>
            <person name="Squares S."/>
            <person name="Stevens K."/>
            <person name="Taylor K."/>
            <person name="Taylor R.G."/>
            <person name="Tivey A."/>
            <person name="Walsh S.V."/>
            <person name="Warren T."/>
            <person name="Whitehead S."/>
            <person name="Woodward J.R."/>
            <person name="Volckaert G."/>
            <person name="Aert R."/>
            <person name="Robben J."/>
            <person name="Grymonprez B."/>
            <person name="Weltjens I."/>
            <person name="Vanstreels E."/>
            <person name="Rieger M."/>
            <person name="Schaefer M."/>
            <person name="Mueller-Auer S."/>
            <person name="Gabel C."/>
            <person name="Fuchs M."/>
            <person name="Duesterhoeft A."/>
            <person name="Fritzc C."/>
            <person name="Holzer E."/>
            <person name="Moestl D."/>
            <person name="Hilbert H."/>
            <person name="Borzym K."/>
            <person name="Langer I."/>
            <person name="Beck A."/>
            <person name="Lehrach H."/>
            <person name="Reinhardt R."/>
            <person name="Pohl T.M."/>
            <person name="Eger P."/>
            <person name="Zimmermann W."/>
            <person name="Wedler H."/>
            <person name="Wambutt R."/>
            <person name="Purnelle B."/>
            <person name="Goffeau A."/>
            <person name="Cadieu E."/>
            <person name="Dreano S."/>
            <person name="Gloux S."/>
            <person name="Lelaure V."/>
            <person name="Mottier S."/>
            <person name="Galibert F."/>
            <person name="Aves S.J."/>
            <person name="Xiang Z."/>
            <person name="Hunt C."/>
            <person name="Moore K."/>
            <person name="Hurst S.M."/>
            <person name="Lucas M."/>
            <person name="Rochet M."/>
            <person name="Gaillardin C."/>
            <person name="Tallada V.A."/>
            <person name="Garzon A."/>
            <person name="Thode G."/>
            <person name="Daga R.R."/>
            <person name="Cruzado L."/>
            <person name="Jimenez J."/>
            <person name="Sanchez M."/>
            <person name="del Rey F."/>
            <person name="Benito J."/>
            <person name="Dominguez A."/>
            <person name="Revuelta J.L."/>
            <person name="Moreno S."/>
            <person name="Armstrong J."/>
            <person name="Forsburg S.L."/>
            <person name="Cerutti L."/>
            <person name="Lowe T."/>
            <person name="McCombie W.R."/>
            <person name="Paulsen I."/>
            <person name="Potashkin J."/>
            <person name="Shpakovski G.V."/>
            <person name="Ussery D."/>
            <person name="Barrell B.G."/>
            <person name="Nurse P."/>
        </authorList>
    </citation>
    <scope>NUCLEOTIDE SEQUENCE [LARGE SCALE GENOMIC DNA]</scope>
    <source>
        <strain>972 / ATCC 24843</strain>
    </source>
</reference>
<name>YDA8_SCHPO</name>